<keyword id="KW-0066">ATP synthesis</keyword>
<keyword id="KW-0997">Cell inner membrane</keyword>
<keyword id="KW-1003">Cell membrane</keyword>
<keyword id="KW-0138">CF(0)</keyword>
<keyword id="KW-0375">Hydrogen ion transport</keyword>
<keyword id="KW-0406">Ion transport</keyword>
<keyword id="KW-0446">Lipid-binding</keyword>
<keyword id="KW-0472">Membrane</keyword>
<keyword id="KW-0812">Transmembrane</keyword>
<keyword id="KW-1133">Transmembrane helix</keyword>
<keyword id="KW-0813">Transport</keyword>
<sequence length="83" mass="8483">METILGMTAIAVALLIGMGALGTAIGFGLLGGKFLEGAARQPEMAPMLQVKMFIVAGLLDAVTMIGVGIALFMLFTNPLGAML</sequence>
<dbReference type="EMBL" id="CP000469">
    <property type="protein sequence ID" value="ABK50352.1"/>
    <property type="molecule type" value="Genomic_DNA"/>
</dbReference>
<dbReference type="RefSeq" id="WP_006083840.1">
    <property type="nucleotide sequence ID" value="NC_008577.1"/>
</dbReference>
<dbReference type="SMR" id="A0L2T3"/>
<dbReference type="STRING" id="94122.Shewana3_4135"/>
<dbReference type="GeneID" id="94725963"/>
<dbReference type="KEGG" id="shn:Shewana3_4135"/>
<dbReference type="eggNOG" id="ENOG5032S3K">
    <property type="taxonomic scope" value="Bacteria"/>
</dbReference>
<dbReference type="HOGENOM" id="CLU_148047_1_0_6"/>
<dbReference type="OrthoDB" id="9811659at2"/>
<dbReference type="Proteomes" id="UP000002589">
    <property type="component" value="Chromosome"/>
</dbReference>
<dbReference type="GO" id="GO:0005886">
    <property type="term" value="C:plasma membrane"/>
    <property type="evidence" value="ECO:0007669"/>
    <property type="project" value="UniProtKB-SubCell"/>
</dbReference>
<dbReference type="GO" id="GO:0045259">
    <property type="term" value="C:proton-transporting ATP synthase complex"/>
    <property type="evidence" value="ECO:0007669"/>
    <property type="project" value="UniProtKB-KW"/>
</dbReference>
<dbReference type="GO" id="GO:0033177">
    <property type="term" value="C:proton-transporting two-sector ATPase complex, proton-transporting domain"/>
    <property type="evidence" value="ECO:0007669"/>
    <property type="project" value="InterPro"/>
</dbReference>
<dbReference type="GO" id="GO:0008289">
    <property type="term" value="F:lipid binding"/>
    <property type="evidence" value="ECO:0007669"/>
    <property type="project" value="UniProtKB-KW"/>
</dbReference>
<dbReference type="GO" id="GO:0046933">
    <property type="term" value="F:proton-transporting ATP synthase activity, rotational mechanism"/>
    <property type="evidence" value="ECO:0007669"/>
    <property type="project" value="UniProtKB-UniRule"/>
</dbReference>
<dbReference type="CDD" id="cd18185">
    <property type="entry name" value="ATP-synt_Fo_c_ATPE"/>
    <property type="match status" value="1"/>
</dbReference>
<dbReference type="FunFam" id="1.20.20.10:FF:000002">
    <property type="entry name" value="ATP synthase subunit c"/>
    <property type="match status" value="1"/>
</dbReference>
<dbReference type="Gene3D" id="1.20.20.10">
    <property type="entry name" value="F1F0 ATP synthase subunit C"/>
    <property type="match status" value="1"/>
</dbReference>
<dbReference type="HAMAP" id="MF_01396">
    <property type="entry name" value="ATP_synth_c_bact"/>
    <property type="match status" value="1"/>
</dbReference>
<dbReference type="InterPro" id="IPR005953">
    <property type="entry name" value="ATP_synth_csu_bac/chlpt"/>
</dbReference>
<dbReference type="InterPro" id="IPR000454">
    <property type="entry name" value="ATP_synth_F0_csu"/>
</dbReference>
<dbReference type="InterPro" id="IPR020537">
    <property type="entry name" value="ATP_synth_F0_csu_DDCD_BS"/>
</dbReference>
<dbReference type="InterPro" id="IPR038662">
    <property type="entry name" value="ATP_synth_F0_csu_sf"/>
</dbReference>
<dbReference type="InterPro" id="IPR002379">
    <property type="entry name" value="ATPase_proteolipid_c-like_dom"/>
</dbReference>
<dbReference type="InterPro" id="IPR035921">
    <property type="entry name" value="F/V-ATP_Csub_sf"/>
</dbReference>
<dbReference type="NCBIfam" id="TIGR01260">
    <property type="entry name" value="ATP_synt_c"/>
    <property type="match status" value="1"/>
</dbReference>
<dbReference type="NCBIfam" id="NF005363">
    <property type="entry name" value="PRK06876.1"/>
    <property type="match status" value="1"/>
</dbReference>
<dbReference type="Pfam" id="PF00137">
    <property type="entry name" value="ATP-synt_C"/>
    <property type="match status" value="1"/>
</dbReference>
<dbReference type="PRINTS" id="PR00124">
    <property type="entry name" value="ATPASEC"/>
</dbReference>
<dbReference type="SUPFAM" id="SSF81333">
    <property type="entry name" value="F1F0 ATP synthase subunit C"/>
    <property type="match status" value="1"/>
</dbReference>
<dbReference type="PROSITE" id="PS00605">
    <property type="entry name" value="ATPASE_C"/>
    <property type="match status" value="1"/>
</dbReference>
<accession>A0L2T3</accession>
<name>ATPL_SHESA</name>
<comment type="function">
    <text evidence="1">F(1)F(0) ATP synthase produces ATP from ADP in the presence of a proton or sodium gradient. F-type ATPases consist of two structural domains, F(1) containing the extramembraneous catalytic core and F(0) containing the membrane proton channel, linked together by a central stalk and a peripheral stalk. During catalysis, ATP synthesis in the catalytic domain of F(1) is coupled via a rotary mechanism of the central stalk subunits to proton translocation.</text>
</comment>
<comment type="function">
    <text evidence="1">Key component of the F(0) channel; it plays a direct role in translocation across the membrane. A homomeric c-ring of between 10-14 subunits forms the central stalk rotor element with the F(1) delta and epsilon subunits.</text>
</comment>
<comment type="subunit">
    <text evidence="1">F-type ATPases have 2 components, F(1) - the catalytic core - and F(0) - the membrane proton channel. F(1) has five subunits: alpha(3), beta(3), gamma(1), delta(1), epsilon(1). F(0) has three main subunits: a(1), b(2) and c(10-14). The alpha and beta chains form an alternating ring which encloses part of the gamma chain. F(1) is attached to F(0) by a central stalk formed by the gamma and epsilon chains, while a peripheral stalk is formed by the delta and b chains.</text>
</comment>
<comment type="subcellular location">
    <subcellularLocation>
        <location evidence="1">Cell inner membrane</location>
        <topology evidence="1">Multi-pass membrane protein</topology>
    </subcellularLocation>
</comment>
<comment type="similarity">
    <text evidence="1">Belongs to the ATPase C chain family.</text>
</comment>
<gene>
    <name evidence="1" type="primary">atpE</name>
    <name type="ordered locus">Shewana3_4135</name>
</gene>
<organism>
    <name type="scientific">Shewanella sp. (strain ANA-3)</name>
    <dbReference type="NCBI Taxonomy" id="94122"/>
    <lineage>
        <taxon>Bacteria</taxon>
        <taxon>Pseudomonadati</taxon>
        <taxon>Pseudomonadota</taxon>
        <taxon>Gammaproteobacteria</taxon>
        <taxon>Alteromonadales</taxon>
        <taxon>Shewanellaceae</taxon>
        <taxon>Shewanella</taxon>
    </lineage>
</organism>
<evidence type="ECO:0000255" key="1">
    <source>
        <dbReference type="HAMAP-Rule" id="MF_01396"/>
    </source>
</evidence>
<proteinExistence type="inferred from homology"/>
<protein>
    <recommendedName>
        <fullName evidence="1">ATP synthase subunit c</fullName>
    </recommendedName>
    <alternativeName>
        <fullName evidence="1">ATP synthase F(0) sector subunit c</fullName>
    </alternativeName>
    <alternativeName>
        <fullName evidence="1">F-type ATPase subunit c</fullName>
        <shortName evidence="1">F-ATPase subunit c</shortName>
    </alternativeName>
    <alternativeName>
        <fullName evidence="1">Lipid-binding protein</fullName>
    </alternativeName>
</protein>
<feature type="chain" id="PRO_1000184479" description="ATP synthase subunit c">
    <location>
        <begin position="1"/>
        <end position="83"/>
    </location>
</feature>
<feature type="transmembrane region" description="Helical" evidence="1">
    <location>
        <begin position="10"/>
        <end position="30"/>
    </location>
</feature>
<feature type="transmembrane region" description="Helical" evidence="1">
    <location>
        <begin position="52"/>
        <end position="72"/>
    </location>
</feature>
<feature type="site" description="Reversibly protonated during proton transport" evidence="1">
    <location>
        <position position="60"/>
    </location>
</feature>
<reference key="1">
    <citation type="submission" date="2006-09" db="EMBL/GenBank/DDBJ databases">
        <title>Complete sequence of chromosome 1 of Shewanella sp. ANA-3.</title>
        <authorList>
            <person name="Copeland A."/>
            <person name="Lucas S."/>
            <person name="Lapidus A."/>
            <person name="Barry K."/>
            <person name="Detter J.C."/>
            <person name="Glavina del Rio T."/>
            <person name="Hammon N."/>
            <person name="Israni S."/>
            <person name="Dalin E."/>
            <person name="Tice H."/>
            <person name="Pitluck S."/>
            <person name="Chertkov O."/>
            <person name="Brettin T."/>
            <person name="Bruce D."/>
            <person name="Han C."/>
            <person name="Tapia R."/>
            <person name="Gilna P."/>
            <person name="Schmutz J."/>
            <person name="Larimer F."/>
            <person name="Land M."/>
            <person name="Hauser L."/>
            <person name="Kyrpides N."/>
            <person name="Kim E."/>
            <person name="Newman D."/>
            <person name="Salticov C."/>
            <person name="Konstantinidis K."/>
            <person name="Klappenback J."/>
            <person name="Tiedje J."/>
            <person name="Richardson P."/>
        </authorList>
    </citation>
    <scope>NUCLEOTIDE SEQUENCE [LARGE SCALE GENOMIC DNA]</scope>
    <source>
        <strain>ANA-3</strain>
    </source>
</reference>